<gene>
    <name evidence="1" type="primary">tilS</name>
    <name type="ordered locus">HNE_0157</name>
</gene>
<keyword id="KW-0067">ATP-binding</keyword>
<keyword id="KW-0963">Cytoplasm</keyword>
<keyword id="KW-0436">Ligase</keyword>
<keyword id="KW-0547">Nucleotide-binding</keyword>
<keyword id="KW-1185">Reference proteome</keyword>
<keyword id="KW-0819">tRNA processing</keyword>
<evidence type="ECO:0000255" key="1">
    <source>
        <dbReference type="HAMAP-Rule" id="MF_01161"/>
    </source>
</evidence>
<protein>
    <recommendedName>
        <fullName evidence="1">tRNA(Ile)-lysidine synthase</fullName>
        <ecNumber evidence="1">6.3.4.19</ecNumber>
    </recommendedName>
    <alternativeName>
        <fullName evidence="1">tRNA(Ile)-2-lysyl-cytidine synthase</fullName>
    </alternativeName>
    <alternativeName>
        <fullName evidence="1">tRNA(Ile)-lysidine synthetase</fullName>
    </alternativeName>
</protein>
<reference key="1">
    <citation type="journal article" date="2006" name="J. Bacteriol.">
        <title>Comparative genomic evidence for a close relationship between the dimorphic prosthecate bacteria Hyphomonas neptunium and Caulobacter crescentus.</title>
        <authorList>
            <person name="Badger J.H."/>
            <person name="Hoover T.R."/>
            <person name="Brun Y.V."/>
            <person name="Weiner R.M."/>
            <person name="Laub M.T."/>
            <person name="Alexandre G."/>
            <person name="Mrazek J."/>
            <person name="Ren Q."/>
            <person name="Paulsen I.T."/>
            <person name="Nelson K.E."/>
            <person name="Khouri H.M."/>
            <person name="Radune D."/>
            <person name="Sosa J."/>
            <person name="Dodson R.J."/>
            <person name="Sullivan S.A."/>
            <person name="Rosovitz M.J."/>
            <person name="Madupu R."/>
            <person name="Brinkac L.M."/>
            <person name="Durkin A.S."/>
            <person name="Daugherty S.C."/>
            <person name="Kothari S.P."/>
            <person name="Giglio M.G."/>
            <person name="Zhou L."/>
            <person name="Haft D.H."/>
            <person name="Selengut J.D."/>
            <person name="Davidsen T.M."/>
            <person name="Yang Q."/>
            <person name="Zafar N."/>
            <person name="Ward N.L."/>
        </authorList>
    </citation>
    <scope>NUCLEOTIDE SEQUENCE [LARGE SCALE GENOMIC DNA]</scope>
    <source>
        <strain>ATCC 15444</strain>
    </source>
</reference>
<comment type="function">
    <text evidence="1">Ligates lysine onto the cytidine present at position 34 of the AUA codon-specific tRNA(Ile) that contains the anticodon CAU, in an ATP-dependent manner. Cytidine is converted to lysidine, thus changing the amino acid specificity of the tRNA from methionine to isoleucine.</text>
</comment>
<comment type="catalytic activity">
    <reaction evidence="1">
        <text>cytidine(34) in tRNA(Ile2) + L-lysine + ATP = lysidine(34) in tRNA(Ile2) + AMP + diphosphate + H(+)</text>
        <dbReference type="Rhea" id="RHEA:43744"/>
        <dbReference type="Rhea" id="RHEA-COMP:10625"/>
        <dbReference type="Rhea" id="RHEA-COMP:10670"/>
        <dbReference type="ChEBI" id="CHEBI:15378"/>
        <dbReference type="ChEBI" id="CHEBI:30616"/>
        <dbReference type="ChEBI" id="CHEBI:32551"/>
        <dbReference type="ChEBI" id="CHEBI:33019"/>
        <dbReference type="ChEBI" id="CHEBI:82748"/>
        <dbReference type="ChEBI" id="CHEBI:83665"/>
        <dbReference type="ChEBI" id="CHEBI:456215"/>
        <dbReference type="EC" id="6.3.4.19"/>
    </reaction>
</comment>
<comment type="subcellular location">
    <subcellularLocation>
        <location evidence="1">Cytoplasm</location>
    </subcellularLocation>
</comment>
<comment type="domain">
    <text>The N-terminal region contains the highly conserved SGGXDS motif, predicted to be a P-loop motif involved in ATP binding.</text>
</comment>
<comment type="similarity">
    <text evidence="1">Belongs to the tRNA(Ile)-lysidine synthase family.</text>
</comment>
<accession>Q0C5V2</accession>
<name>TILS_HYPNA</name>
<proteinExistence type="inferred from homology"/>
<sequence>MLGLGPQQAAFEAALGALPDRLLDTPVGVAVSGGSDSLALLILAHRWAARRGRVLRALTVDHGLRPESRAEAEAVGRLCADMGIEHDILRLEGAAPRQSALRRGRHAALARTIADKSGHLLLTGHTADDQAETFLMRARQGSGWYGLAGMRPLSLSPVWPEGEGVFIARPLLGIRREALRAFLRDEGLGWADDPSNDNPAFERVRMRRLLCPEMSRNVPVLSLVDRFQTLRMIEDGAIWRWMTANVRAGEAGIHVASFAGHPPERAARALGMLLQIAAGREMPPRGESLRRLAEEIVSKGDFRGATLGGCRITARRTHICLKPECGPLPPGTAARLAATQAILSGNPNEIAASAGKESFLEDLVPIF</sequence>
<feature type="chain" id="PRO_1000065616" description="tRNA(Ile)-lysidine synthase">
    <location>
        <begin position="1"/>
        <end position="367"/>
    </location>
</feature>
<feature type="binding site" evidence="1">
    <location>
        <begin position="32"/>
        <end position="37"/>
    </location>
    <ligand>
        <name>ATP</name>
        <dbReference type="ChEBI" id="CHEBI:30616"/>
    </ligand>
</feature>
<dbReference type="EC" id="6.3.4.19" evidence="1"/>
<dbReference type="EMBL" id="CP000158">
    <property type="protein sequence ID" value="ABI77716.1"/>
    <property type="molecule type" value="Genomic_DNA"/>
</dbReference>
<dbReference type="RefSeq" id="WP_011645191.1">
    <property type="nucleotide sequence ID" value="NC_008358.1"/>
</dbReference>
<dbReference type="SMR" id="Q0C5V2"/>
<dbReference type="STRING" id="228405.HNE_0157"/>
<dbReference type="KEGG" id="hne:HNE_0157"/>
<dbReference type="eggNOG" id="COG0037">
    <property type="taxonomic scope" value="Bacteria"/>
</dbReference>
<dbReference type="HOGENOM" id="CLU_018869_3_0_5"/>
<dbReference type="Proteomes" id="UP000001959">
    <property type="component" value="Chromosome"/>
</dbReference>
<dbReference type="GO" id="GO:0005737">
    <property type="term" value="C:cytoplasm"/>
    <property type="evidence" value="ECO:0007669"/>
    <property type="project" value="UniProtKB-SubCell"/>
</dbReference>
<dbReference type="GO" id="GO:0005524">
    <property type="term" value="F:ATP binding"/>
    <property type="evidence" value="ECO:0007669"/>
    <property type="project" value="UniProtKB-UniRule"/>
</dbReference>
<dbReference type="GO" id="GO:0032267">
    <property type="term" value="F:tRNA(Ile)-lysidine synthase activity"/>
    <property type="evidence" value="ECO:0007669"/>
    <property type="project" value="UniProtKB-EC"/>
</dbReference>
<dbReference type="GO" id="GO:0006400">
    <property type="term" value="P:tRNA modification"/>
    <property type="evidence" value="ECO:0007669"/>
    <property type="project" value="UniProtKB-UniRule"/>
</dbReference>
<dbReference type="CDD" id="cd01992">
    <property type="entry name" value="TilS_N"/>
    <property type="match status" value="1"/>
</dbReference>
<dbReference type="Gene3D" id="3.40.50.620">
    <property type="entry name" value="HUPs"/>
    <property type="match status" value="1"/>
</dbReference>
<dbReference type="HAMAP" id="MF_01161">
    <property type="entry name" value="tRNA_Ile_lys_synt"/>
    <property type="match status" value="1"/>
</dbReference>
<dbReference type="InterPro" id="IPR014729">
    <property type="entry name" value="Rossmann-like_a/b/a_fold"/>
</dbReference>
<dbReference type="InterPro" id="IPR011063">
    <property type="entry name" value="TilS/TtcA_N"/>
</dbReference>
<dbReference type="InterPro" id="IPR012094">
    <property type="entry name" value="tRNA_Ile_lys_synt"/>
</dbReference>
<dbReference type="InterPro" id="IPR012795">
    <property type="entry name" value="tRNA_Ile_lys_synt_N"/>
</dbReference>
<dbReference type="NCBIfam" id="TIGR02432">
    <property type="entry name" value="lysidine_TilS_N"/>
    <property type="match status" value="1"/>
</dbReference>
<dbReference type="PANTHER" id="PTHR43033">
    <property type="entry name" value="TRNA(ILE)-LYSIDINE SYNTHASE-RELATED"/>
    <property type="match status" value="1"/>
</dbReference>
<dbReference type="PANTHER" id="PTHR43033:SF1">
    <property type="entry name" value="TRNA(ILE)-LYSIDINE SYNTHASE-RELATED"/>
    <property type="match status" value="1"/>
</dbReference>
<dbReference type="Pfam" id="PF01171">
    <property type="entry name" value="ATP_bind_3"/>
    <property type="match status" value="1"/>
</dbReference>
<dbReference type="SUPFAM" id="SSF52402">
    <property type="entry name" value="Adenine nucleotide alpha hydrolases-like"/>
    <property type="match status" value="1"/>
</dbReference>
<organism>
    <name type="scientific">Hyphomonas neptunium (strain ATCC 15444)</name>
    <dbReference type="NCBI Taxonomy" id="228405"/>
    <lineage>
        <taxon>Bacteria</taxon>
        <taxon>Pseudomonadati</taxon>
        <taxon>Pseudomonadota</taxon>
        <taxon>Alphaproteobacteria</taxon>
        <taxon>Hyphomonadales</taxon>
        <taxon>Hyphomonadaceae</taxon>
        <taxon>Hyphomonas</taxon>
    </lineage>
</organism>